<protein>
    <recommendedName>
        <fullName>Movement protein</fullName>
        <shortName>MP</shortName>
    </recommendedName>
    <alternativeName>
        <fullName>17 kDa protein</fullName>
    </alternativeName>
</protein>
<accession>P09513</accession>
<proteinExistence type="inferred from homology"/>
<feature type="chain" id="PRO_0000222420" description="Movement protein">
    <location>
        <begin position="1"/>
        <end position="153"/>
    </location>
</feature>
<feature type="region of interest" description="Disordered" evidence="1">
    <location>
        <begin position="1"/>
        <end position="24"/>
    </location>
</feature>
<feature type="region of interest" description="Disordered" evidence="1">
    <location>
        <begin position="107"/>
        <end position="153"/>
    </location>
</feature>
<feature type="compositionally biased region" description="Polar residues" evidence="1">
    <location>
        <begin position="109"/>
        <end position="122"/>
    </location>
</feature>
<feature type="compositionally biased region" description="Polar residues" evidence="1">
    <location>
        <begin position="140"/>
        <end position="153"/>
    </location>
</feature>
<gene>
    <name type="ORF">ORF4</name>
</gene>
<sequence length="153" mass="17147">MAQEGGAVEQFGQWLWSNPIEQDPDDEMVDAREEEGQILYLDQQAGLRYSYSQLTTLKPTPPGQSNSAPVYRNAQRFQTEYSSPTIVTRSQVSELSLSHTRPPIRQALSLLSSTPRASNQPWVATLIPSPSARPPPRPSGQRQLMGRNSRNQR</sequence>
<dbReference type="EMBL" id="M21347">
    <property type="protein sequence ID" value="AAA87367.1"/>
    <property type="molecule type" value="Genomic_RNA"/>
</dbReference>
<dbReference type="EMBL" id="X07653">
    <property type="protein sequence ID" value="CAA30494.1"/>
    <property type="molecule type" value="Genomic_RNA"/>
</dbReference>
<dbReference type="KEGG" id="vg:1491997"/>
<dbReference type="Proteomes" id="UP000006722">
    <property type="component" value="Genome"/>
</dbReference>
<dbReference type="GO" id="GO:0044199">
    <property type="term" value="C:host cell nuclear envelope"/>
    <property type="evidence" value="ECO:0007669"/>
    <property type="project" value="UniProtKB-SubCell"/>
</dbReference>
<dbReference type="GO" id="GO:0052170">
    <property type="term" value="P:symbiont-mediated suppression of host innate immune response"/>
    <property type="evidence" value="ECO:0007669"/>
    <property type="project" value="UniProtKB-KW"/>
</dbReference>
<dbReference type="GO" id="GO:0046740">
    <property type="term" value="P:transport of virus in host, cell to cell"/>
    <property type="evidence" value="ECO:0007669"/>
    <property type="project" value="UniProtKB-KW"/>
</dbReference>
<dbReference type="InterPro" id="IPR001964">
    <property type="entry name" value="Luteo_VPG"/>
</dbReference>
<dbReference type="Pfam" id="PF01659">
    <property type="entry name" value="Luteo_Vpg"/>
    <property type="match status" value="1"/>
</dbReference>
<dbReference type="PRINTS" id="PR00912">
    <property type="entry name" value="LVIRUSORF5"/>
</dbReference>
<name>MVP_BYDVP</name>
<organismHost>
    <name type="scientific">Avena byzantina</name>
    <dbReference type="NCBI Taxonomy" id="146531"/>
</organismHost>
<organismHost>
    <name type="scientific">Avena sativa</name>
    <name type="common">Oat</name>
    <dbReference type="NCBI Taxonomy" id="4498"/>
</organismHost>
<organismHost>
    <name type="scientific">Hordeum vulgare</name>
    <name type="common">Barley</name>
    <dbReference type="NCBI Taxonomy" id="4513"/>
</organismHost>
<organismHost>
    <name type="scientific">Lolium multiflorum</name>
    <name type="common">Italian ryegrass</name>
    <name type="synonym">Lolium perenne subsp. multiflorum</name>
    <dbReference type="NCBI Taxonomy" id="4521"/>
</organismHost>
<organismHost>
    <name type="scientific">Lolium perenne</name>
    <name type="common">Perennial ryegrass</name>
    <dbReference type="NCBI Taxonomy" id="4522"/>
</organismHost>
<organismHost>
    <name type="scientific">Oryza sativa</name>
    <name type="common">Rice</name>
    <dbReference type="NCBI Taxonomy" id="4530"/>
</organismHost>
<organismHost>
    <name type="scientific">Secale cereale</name>
    <name type="common">Rye</name>
    <dbReference type="NCBI Taxonomy" id="4550"/>
</organismHost>
<organismHost>
    <name type="scientific">Triticum aestivum</name>
    <name type="common">Wheat</name>
    <dbReference type="NCBI Taxonomy" id="4565"/>
</organismHost>
<organismHost>
    <name type="scientific">Zea mays</name>
    <name type="common">Maize</name>
    <dbReference type="NCBI Taxonomy" id="4577"/>
</organismHost>
<evidence type="ECO:0000256" key="1">
    <source>
        <dbReference type="SAM" id="MobiDB-lite"/>
    </source>
</evidence>
<evidence type="ECO:0000269" key="2">
    <source>
    </source>
</evidence>
<evidence type="ECO:0000269" key="3">
    <source>
    </source>
</evidence>
<evidence type="ECO:0000269" key="4">
    <source>
    </source>
</evidence>
<evidence type="ECO:0000269" key="5">
    <source>
    </source>
</evidence>
<evidence type="ECO:0000305" key="6"/>
<organism>
    <name type="scientific">Barley yellow dwarf virus (isolate PAV)</name>
    <name type="common">BYDV</name>
    <dbReference type="NCBI Taxonomy" id="2169986"/>
    <lineage>
        <taxon>Viruses</taxon>
        <taxon>Riboviria</taxon>
        <taxon>Orthornavirae</taxon>
        <taxon>Kitrinoviricota</taxon>
        <taxon>Tolucaviricetes</taxon>
        <taxon>Tolivirales</taxon>
        <taxon>Tombusviridae</taxon>
        <taxon>Regressovirinae</taxon>
        <taxon>Luteovirus</taxon>
        <taxon>Luteovirus pavhordei</taxon>
    </lineage>
</organism>
<comment type="function">
    <text evidence="4 5">Transports viral genome to neighboring plant cells directly through plasmosdesmata, without any budding (PubMed:8623554). The movement protein allows efficient cell to cell propagation, by bypassing the host cell wall barrier (PubMed:8623554). Acts as a suppressor of RNA-mediated gene silencing, also known as post-transcriptional gene silencing (PTGS), a mechanism of plant viral defense that limits the accumulation of viral RNAs (PubMed:28994713).</text>
</comment>
<comment type="subcellular location">
    <subcellularLocation>
        <location evidence="2">Host nucleus envelope</location>
    </subcellularLocation>
</comment>
<comment type="domain">
    <text evidence="3">The N-terminus forms a amphiphilic alpha-helix, which partitions into the nuclear membrane.</text>
</comment>
<comment type="similarity">
    <text evidence="6">Belongs to the luteoviruses movement protein family.</text>
</comment>
<keyword id="KW-1048">Host nucleus</keyword>
<keyword id="KW-0945">Host-virus interaction</keyword>
<keyword id="KW-1090">Inhibition of host innate immune response by virus</keyword>
<keyword id="KW-1185">Reference proteome</keyword>
<keyword id="KW-0941">Suppressor of RNA silencing</keyword>
<keyword id="KW-0813">Transport</keyword>
<keyword id="KW-0899">Viral immunoevasion</keyword>
<keyword id="KW-0916">Viral movement protein</keyword>
<reference key="1">
    <citation type="journal article" date="1988" name="Nucleic Acids Res.">
        <title>Sequence and organization of barley yellow dwarf virus genomic RNA.</title>
        <authorList>
            <person name="Miller W.A."/>
            <person name="Waterhouse P.M."/>
            <person name="Gerlach W.L."/>
        </authorList>
    </citation>
    <scope>NUCLEOTIDE SEQUENCE [GENOMIC RNA]</scope>
</reference>
<reference key="2">
    <citation type="journal article" date="1988" name="Virology">
        <title>Sequence and identification of the barley yellow dwarf virus coat protein gene.</title>
        <authorList>
            <person name="Miller W.A."/>
            <person name="Waterhouse P.M."/>
            <person name="Kortt A.A."/>
            <person name="Gerlach W.L."/>
        </authorList>
    </citation>
    <scope>NUCLEOTIDE SEQUENCE [GENOMIC RNA]</scope>
</reference>
<reference key="3">
    <citation type="journal article" date="1996" name="Virology">
        <title>Aphid transmission and systemic plant infection determinants of barley yellow dwarf luteovirus-PAV are contained in the coat protein readthrough domain and 17-kDa protein, respectively.</title>
        <authorList>
            <person name="Chay C.A."/>
            <person name="Gunasinge U.B."/>
            <person name="Dinesh-Kumar S.P."/>
            <person name="Miller W.A."/>
            <person name="Gray S.M."/>
        </authorList>
    </citation>
    <scope>FUNCTION</scope>
</reference>
<reference key="4">
    <citation type="journal article" date="2005" name="Biopolymers">
        <title>Interaction between the movement protein of barley yellow dwarf virus and the cell nuclear envelope: role of a putative amphiphilic alpha-helix at the N-terminus of the movement protein.</title>
        <authorList>
            <person name="Liu K."/>
            <person name="Xia Z."/>
            <person name="Zhang Y."/>
            <person name="Wen Y."/>
            <person name="Wang D."/>
            <person name="Brandenburg K."/>
            <person name="Harris F."/>
            <person name="Phoenix D.A."/>
        </authorList>
    </citation>
    <scope>SUBCELLULAR LOCATION</scope>
</reference>
<reference key="5">
    <citation type="journal article" date="2007" name="Peptides">
        <title>Characterization of the N-terminal segment used by the barley yellow dwarf virus movement protein to promote interaction with the nuclear membrane of host plant cells.</title>
        <authorList>
            <person name="Dennison S.R."/>
            <person name="Harris F."/>
            <person name="Brandenburg K."/>
            <person name="Phoenix D.A."/>
        </authorList>
    </citation>
    <scope>DOMAIN</scope>
</reference>
<reference key="6">
    <citation type="journal article" date="2017" name="Viruses">
        <title>The Luteovirus P4 Movement Protein Is a Suppressor of Systemic RNA Silencing.</title>
        <authorList>
            <person name="Fusaro A.F."/>
            <person name="Barton D.A."/>
            <person name="Nakasugi K."/>
            <person name="Jackson C."/>
            <person name="Kalischuk M.L."/>
            <person name="Kawchuk L.M."/>
            <person name="Vaslin M.F.S."/>
            <person name="Correa R.L."/>
            <person name="Waterhouse P.M."/>
        </authorList>
    </citation>
    <scope>FUNCTION</scope>
</reference>